<name>CYAY_MANSM</name>
<evidence type="ECO:0000255" key="1">
    <source>
        <dbReference type="HAMAP-Rule" id="MF_00142"/>
    </source>
</evidence>
<keyword id="KW-0408">Iron</keyword>
<keyword id="KW-0479">Metal-binding</keyword>
<dbReference type="EMBL" id="AE016827">
    <property type="protein sequence ID" value="AAU38689.1"/>
    <property type="molecule type" value="Genomic_DNA"/>
</dbReference>
<dbReference type="RefSeq" id="WP_011201237.1">
    <property type="nucleotide sequence ID" value="NC_006300.1"/>
</dbReference>
<dbReference type="SMR" id="Q65QS1"/>
<dbReference type="STRING" id="221988.MS2082"/>
<dbReference type="KEGG" id="msu:MS2082"/>
<dbReference type="eggNOG" id="COG1965">
    <property type="taxonomic scope" value="Bacteria"/>
</dbReference>
<dbReference type="HOGENOM" id="CLU_080880_3_0_6"/>
<dbReference type="OrthoDB" id="285675at2"/>
<dbReference type="Proteomes" id="UP000000607">
    <property type="component" value="Chromosome"/>
</dbReference>
<dbReference type="GO" id="GO:0005829">
    <property type="term" value="C:cytosol"/>
    <property type="evidence" value="ECO:0007669"/>
    <property type="project" value="TreeGrafter"/>
</dbReference>
<dbReference type="GO" id="GO:0008199">
    <property type="term" value="F:ferric iron binding"/>
    <property type="evidence" value="ECO:0007669"/>
    <property type="project" value="InterPro"/>
</dbReference>
<dbReference type="GO" id="GO:0008198">
    <property type="term" value="F:ferrous iron binding"/>
    <property type="evidence" value="ECO:0007669"/>
    <property type="project" value="TreeGrafter"/>
</dbReference>
<dbReference type="GO" id="GO:0016226">
    <property type="term" value="P:iron-sulfur cluster assembly"/>
    <property type="evidence" value="ECO:0007669"/>
    <property type="project" value="UniProtKB-UniRule"/>
</dbReference>
<dbReference type="CDD" id="cd00503">
    <property type="entry name" value="Frataxin"/>
    <property type="match status" value="1"/>
</dbReference>
<dbReference type="Gene3D" id="3.30.920.10">
    <property type="entry name" value="Frataxin/CyaY"/>
    <property type="match status" value="1"/>
</dbReference>
<dbReference type="HAMAP" id="MF_00142">
    <property type="entry name" value="CyaY"/>
    <property type="match status" value="1"/>
</dbReference>
<dbReference type="InterPro" id="IPR047584">
    <property type="entry name" value="CyaY"/>
</dbReference>
<dbReference type="InterPro" id="IPR002908">
    <property type="entry name" value="Frataxin/CyaY"/>
</dbReference>
<dbReference type="InterPro" id="IPR036524">
    <property type="entry name" value="Frataxin/CyaY_sf"/>
</dbReference>
<dbReference type="InterPro" id="IPR020895">
    <property type="entry name" value="Frataxin_CS"/>
</dbReference>
<dbReference type="NCBIfam" id="TIGR03421">
    <property type="entry name" value="FeS_CyaY"/>
    <property type="match status" value="1"/>
</dbReference>
<dbReference type="PANTHER" id="PTHR16821">
    <property type="entry name" value="FRATAXIN"/>
    <property type="match status" value="1"/>
</dbReference>
<dbReference type="PANTHER" id="PTHR16821:SF2">
    <property type="entry name" value="FRATAXIN, MITOCHONDRIAL"/>
    <property type="match status" value="1"/>
</dbReference>
<dbReference type="Pfam" id="PF01491">
    <property type="entry name" value="Frataxin_Cyay"/>
    <property type="match status" value="1"/>
</dbReference>
<dbReference type="SMART" id="SM01219">
    <property type="entry name" value="Frataxin_Cyay"/>
    <property type="match status" value="1"/>
</dbReference>
<dbReference type="SUPFAM" id="SSF55387">
    <property type="entry name" value="Frataxin/Nqo15-like"/>
    <property type="match status" value="1"/>
</dbReference>
<dbReference type="PROSITE" id="PS01344">
    <property type="entry name" value="FRATAXIN_1"/>
    <property type="match status" value="1"/>
</dbReference>
<dbReference type="PROSITE" id="PS50810">
    <property type="entry name" value="FRATAXIN_2"/>
    <property type="match status" value="1"/>
</dbReference>
<reference key="1">
    <citation type="journal article" date="2004" name="Nat. Biotechnol.">
        <title>The genome sequence of the capnophilic rumen bacterium Mannheimia succiniciproducens.</title>
        <authorList>
            <person name="Hong S.H."/>
            <person name="Kim J.S."/>
            <person name="Lee S.Y."/>
            <person name="In Y.H."/>
            <person name="Choi S.S."/>
            <person name="Rih J.-K."/>
            <person name="Kim C.H."/>
            <person name="Jeong H."/>
            <person name="Hur C.G."/>
            <person name="Kim J.J."/>
        </authorList>
    </citation>
    <scope>NUCLEOTIDE SEQUENCE [LARGE SCALE GENOMIC DNA]</scope>
    <source>
        <strain>KCTC 0769BP / MBEL55E</strain>
    </source>
</reference>
<organism>
    <name type="scientific">Mannheimia succiniciproducens (strain KCTC 0769BP / MBEL55E)</name>
    <dbReference type="NCBI Taxonomy" id="221988"/>
    <lineage>
        <taxon>Bacteria</taxon>
        <taxon>Pseudomonadati</taxon>
        <taxon>Pseudomonadota</taxon>
        <taxon>Gammaproteobacteria</taxon>
        <taxon>Pasteurellales</taxon>
        <taxon>Pasteurellaceae</taxon>
        <taxon>Basfia</taxon>
    </lineage>
</organism>
<protein>
    <recommendedName>
        <fullName evidence="1">Iron-sulfur cluster assembly protein CyaY</fullName>
    </recommendedName>
</protein>
<comment type="function">
    <text evidence="1">Involved in iron-sulfur (Fe-S) cluster assembly. May act as a regulator of Fe-S biogenesis.</text>
</comment>
<comment type="similarity">
    <text evidence="1">Belongs to the frataxin family.</text>
</comment>
<proteinExistence type="inferred from homology"/>
<accession>Q65QS1</accession>
<feature type="chain" id="PRO_0000193943" description="Iron-sulfur cluster assembly protein CyaY">
    <location>
        <begin position="1"/>
        <end position="102"/>
    </location>
</feature>
<sequence length="102" mass="11841">MNIAEFHQNIDQIWDSIEEQLENQDIDADCERQGAVFTITFENRTQIVINKQEPLLELWLASKLGGFHFSYKNGDWLNYEGKRFWDCLAQACAAHGEEVSFA</sequence>
<gene>
    <name evidence="1" type="primary">cyaY</name>
    <name type="ordered locus">MS2082</name>
</gene>